<name>MURG_SALSV</name>
<evidence type="ECO:0000255" key="1">
    <source>
        <dbReference type="HAMAP-Rule" id="MF_00033"/>
    </source>
</evidence>
<feature type="chain" id="PRO_1000090472" description="UDP-N-acetylglucosamine--N-acetylmuramyl-(pentapeptide) pyrophosphoryl-undecaprenol N-acetylglucosamine transferase">
    <location>
        <begin position="1"/>
        <end position="355"/>
    </location>
</feature>
<feature type="binding site" evidence="1">
    <location>
        <begin position="15"/>
        <end position="17"/>
    </location>
    <ligand>
        <name>UDP-N-acetyl-alpha-D-glucosamine</name>
        <dbReference type="ChEBI" id="CHEBI:57705"/>
    </ligand>
</feature>
<feature type="binding site" evidence="1">
    <location>
        <position position="127"/>
    </location>
    <ligand>
        <name>UDP-N-acetyl-alpha-D-glucosamine</name>
        <dbReference type="ChEBI" id="CHEBI:57705"/>
    </ligand>
</feature>
<feature type="binding site" evidence="1">
    <location>
        <position position="163"/>
    </location>
    <ligand>
        <name>UDP-N-acetyl-alpha-D-glucosamine</name>
        <dbReference type="ChEBI" id="CHEBI:57705"/>
    </ligand>
</feature>
<feature type="binding site" evidence="1">
    <location>
        <position position="191"/>
    </location>
    <ligand>
        <name>UDP-N-acetyl-alpha-D-glucosamine</name>
        <dbReference type="ChEBI" id="CHEBI:57705"/>
    </ligand>
</feature>
<feature type="binding site" evidence="1">
    <location>
        <position position="244"/>
    </location>
    <ligand>
        <name>UDP-N-acetyl-alpha-D-glucosamine</name>
        <dbReference type="ChEBI" id="CHEBI:57705"/>
    </ligand>
</feature>
<feature type="binding site" evidence="1">
    <location>
        <begin position="263"/>
        <end position="268"/>
    </location>
    <ligand>
        <name>UDP-N-acetyl-alpha-D-glucosamine</name>
        <dbReference type="ChEBI" id="CHEBI:57705"/>
    </ligand>
</feature>
<feature type="binding site" evidence="1">
    <location>
        <position position="288"/>
    </location>
    <ligand>
        <name>UDP-N-acetyl-alpha-D-glucosamine</name>
        <dbReference type="ChEBI" id="CHEBI:57705"/>
    </ligand>
</feature>
<proteinExistence type="inferred from homology"/>
<comment type="function">
    <text evidence="1">Cell wall formation. Catalyzes the transfer of a GlcNAc subunit on undecaprenyl-pyrophosphoryl-MurNAc-pentapeptide (lipid intermediate I) to form undecaprenyl-pyrophosphoryl-MurNAc-(pentapeptide)GlcNAc (lipid intermediate II).</text>
</comment>
<comment type="catalytic activity">
    <reaction evidence="1">
        <text>di-trans,octa-cis-undecaprenyl diphospho-N-acetyl-alpha-D-muramoyl-L-alanyl-D-glutamyl-meso-2,6-diaminopimeloyl-D-alanyl-D-alanine + UDP-N-acetyl-alpha-D-glucosamine = di-trans,octa-cis-undecaprenyl diphospho-[N-acetyl-alpha-D-glucosaminyl-(1-&gt;4)]-N-acetyl-alpha-D-muramoyl-L-alanyl-D-glutamyl-meso-2,6-diaminopimeloyl-D-alanyl-D-alanine + UDP + H(+)</text>
        <dbReference type="Rhea" id="RHEA:31227"/>
        <dbReference type="ChEBI" id="CHEBI:15378"/>
        <dbReference type="ChEBI" id="CHEBI:57705"/>
        <dbReference type="ChEBI" id="CHEBI:58223"/>
        <dbReference type="ChEBI" id="CHEBI:61387"/>
        <dbReference type="ChEBI" id="CHEBI:61388"/>
        <dbReference type="EC" id="2.4.1.227"/>
    </reaction>
</comment>
<comment type="pathway">
    <text evidence="1">Cell wall biogenesis; peptidoglycan biosynthesis.</text>
</comment>
<comment type="subcellular location">
    <subcellularLocation>
        <location evidence="1">Cell inner membrane</location>
        <topology evidence="1">Peripheral membrane protein</topology>
        <orientation evidence="1">Cytoplasmic side</orientation>
    </subcellularLocation>
</comment>
<comment type="similarity">
    <text evidence="1">Belongs to the glycosyltransferase 28 family. MurG subfamily.</text>
</comment>
<accession>B4TXH8</accession>
<reference key="1">
    <citation type="journal article" date="2011" name="J. Bacteriol.">
        <title>Comparative genomics of 28 Salmonella enterica isolates: evidence for CRISPR-mediated adaptive sublineage evolution.</title>
        <authorList>
            <person name="Fricke W.F."/>
            <person name="Mammel M.K."/>
            <person name="McDermott P.F."/>
            <person name="Tartera C."/>
            <person name="White D.G."/>
            <person name="Leclerc J.E."/>
            <person name="Ravel J."/>
            <person name="Cebula T.A."/>
        </authorList>
    </citation>
    <scope>NUCLEOTIDE SEQUENCE [LARGE SCALE GENOMIC DNA]</scope>
    <source>
        <strain>CVM19633</strain>
    </source>
</reference>
<dbReference type="EC" id="2.4.1.227" evidence="1"/>
<dbReference type="EMBL" id="CP001127">
    <property type="protein sequence ID" value="ACF89877.1"/>
    <property type="molecule type" value="Genomic_DNA"/>
</dbReference>
<dbReference type="RefSeq" id="WP_000016613.1">
    <property type="nucleotide sequence ID" value="NC_011094.1"/>
</dbReference>
<dbReference type="SMR" id="B4TXH8"/>
<dbReference type="CAZy" id="GT28">
    <property type="family name" value="Glycosyltransferase Family 28"/>
</dbReference>
<dbReference type="KEGG" id="sew:SeSA_A0144"/>
<dbReference type="HOGENOM" id="CLU_037404_2_0_6"/>
<dbReference type="UniPathway" id="UPA00219"/>
<dbReference type="Proteomes" id="UP000001865">
    <property type="component" value="Chromosome"/>
</dbReference>
<dbReference type="GO" id="GO:0005886">
    <property type="term" value="C:plasma membrane"/>
    <property type="evidence" value="ECO:0007669"/>
    <property type="project" value="UniProtKB-SubCell"/>
</dbReference>
<dbReference type="GO" id="GO:0051991">
    <property type="term" value="F:UDP-N-acetyl-D-glucosamine:N-acetylmuramoyl-L-alanyl-D-glutamyl-meso-2,6-diaminopimelyl-D-alanyl-D-alanine-diphosphoundecaprenol 4-beta-N-acetylglucosaminlytransferase activity"/>
    <property type="evidence" value="ECO:0007669"/>
    <property type="project" value="RHEA"/>
</dbReference>
<dbReference type="GO" id="GO:0050511">
    <property type="term" value="F:undecaprenyldiphospho-muramoylpentapeptide beta-N-acetylglucosaminyltransferase activity"/>
    <property type="evidence" value="ECO:0007669"/>
    <property type="project" value="UniProtKB-UniRule"/>
</dbReference>
<dbReference type="GO" id="GO:0005975">
    <property type="term" value="P:carbohydrate metabolic process"/>
    <property type="evidence" value="ECO:0007669"/>
    <property type="project" value="InterPro"/>
</dbReference>
<dbReference type="GO" id="GO:0051301">
    <property type="term" value="P:cell division"/>
    <property type="evidence" value="ECO:0007669"/>
    <property type="project" value="UniProtKB-KW"/>
</dbReference>
<dbReference type="GO" id="GO:0071555">
    <property type="term" value="P:cell wall organization"/>
    <property type="evidence" value="ECO:0007669"/>
    <property type="project" value="UniProtKB-KW"/>
</dbReference>
<dbReference type="GO" id="GO:0030259">
    <property type="term" value="P:lipid glycosylation"/>
    <property type="evidence" value="ECO:0007669"/>
    <property type="project" value="UniProtKB-UniRule"/>
</dbReference>
<dbReference type="GO" id="GO:0009252">
    <property type="term" value="P:peptidoglycan biosynthetic process"/>
    <property type="evidence" value="ECO:0007669"/>
    <property type="project" value="UniProtKB-UniRule"/>
</dbReference>
<dbReference type="GO" id="GO:0008360">
    <property type="term" value="P:regulation of cell shape"/>
    <property type="evidence" value="ECO:0007669"/>
    <property type="project" value="UniProtKB-KW"/>
</dbReference>
<dbReference type="CDD" id="cd03785">
    <property type="entry name" value="GT28_MurG"/>
    <property type="match status" value="1"/>
</dbReference>
<dbReference type="FunFam" id="3.40.50.2000:FF:000016">
    <property type="entry name" value="UDP-N-acetylglucosamine--N-acetylmuramyl-(pentapeptide) pyrophosphoryl-undecaprenol N-acetylglucosamine transferase"/>
    <property type="match status" value="1"/>
</dbReference>
<dbReference type="FunFam" id="3.40.50.2000:FF:000018">
    <property type="entry name" value="UDP-N-acetylglucosamine--N-acetylmuramyl-(pentapeptide) pyrophosphoryl-undecaprenol N-acetylglucosamine transferase"/>
    <property type="match status" value="1"/>
</dbReference>
<dbReference type="Gene3D" id="3.40.50.2000">
    <property type="entry name" value="Glycogen Phosphorylase B"/>
    <property type="match status" value="2"/>
</dbReference>
<dbReference type="HAMAP" id="MF_00033">
    <property type="entry name" value="MurG"/>
    <property type="match status" value="1"/>
</dbReference>
<dbReference type="InterPro" id="IPR006009">
    <property type="entry name" value="GlcNAc_MurG"/>
</dbReference>
<dbReference type="InterPro" id="IPR007235">
    <property type="entry name" value="Glyco_trans_28_C"/>
</dbReference>
<dbReference type="InterPro" id="IPR004276">
    <property type="entry name" value="GlycoTrans_28_N"/>
</dbReference>
<dbReference type="NCBIfam" id="TIGR01133">
    <property type="entry name" value="murG"/>
    <property type="match status" value="1"/>
</dbReference>
<dbReference type="PANTHER" id="PTHR21015:SF22">
    <property type="entry name" value="GLYCOSYLTRANSFERASE"/>
    <property type="match status" value="1"/>
</dbReference>
<dbReference type="PANTHER" id="PTHR21015">
    <property type="entry name" value="UDP-N-ACETYLGLUCOSAMINE--N-ACETYLMURAMYL-(PENTAPEPTIDE) PYROPHOSPHORYL-UNDECAPRENOL N-ACETYLGLUCOSAMINE TRANSFERASE 1"/>
    <property type="match status" value="1"/>
</dbReference>
<dbReference type="Pfam" id="PF04101">
    <property type="entry name" value="Glyco_tran_28_C"/>
    <property type="match status" value="1"/>
</dbReference>
<dbReference type="Pfam" id="PF03033">
    <property type="entry name" value="Glyco_transf_28"/>
    <property type="match status" value="1"/>
</dbReference>
<dbReference type="SUPFAM" id="SSF53756">
    <property type="entry name" value="UDP-Glycosyltransferase/glycogen phosphorylase"/>
    <property type="match status" value="1"/>
</dbReference>
<sequence>MSGQPKRLMVMAGGTGGHVFPGLAVAHHLMAQGWQVRWLGTADRMEADLVPKHGIDIDFIRISGLRGKGVKALLAAPLRIFNAWRQARAIMKRFKPDVVLGMGGYVSGPGGLAAWSLGIPVVLHEQNGIAGLTNQWLAKIATTVMQAFPGAFPNAEVVGNPVRTDVLALPLPQVRLAGRDGPIRVLVVGGSQGARVLNQTMPQVAARLGDTVTIWHQSGKGAQLTVEQAYAGAGQPQHKVTEFIDDMAAAYAWADVVVCRSGALTVSEIAAAGLPAIFVPFQHKDRQQYWNALPLENAGAAKIFEQPQFTVEAVADTLAGWSREALLTMAERARAVSIPDATERVASEVSRVART</sequence>
<keyword id="KW-0131">Cell cycle</keyword>
<keyword id="KW-0132">Cell division</keyword>
<keyword id="KW-0997">Cell inner membrane</keyword>
<keyword id="KW-1003">Cell membrane</keyword>
<keyword id="KW-0133">Cell shape</keyword>
<keyword id="KW-0961">Cell wall biogenesis/degradation</keyword>
<keyword id="KW-0328">Glycosyltransferase</keyword>
<keyword id="KW-0472">Membrane</keyword>
<keyword id="KW-0573">Peptidoglycan synthesis</keyword>
<keyword id="KW-0808">Transferase</keyword>
<gene>
    <name evidence="1" type="primary">murG</name>
    <name type="ordered locus">SeSA_A0144</name>
</gene>
<organism>
    <name type="scientific">Salmonella schwarzengrund (strain CVM19633)</name>
    <dbReference type="NCBI Taxonomy" id="439843"/>
    <lineage>
        <taxon>Bacteria</taxon>
        <taxon>Pseudomonadati</taxon>
        <taxon>Pseudomonadota</taxon>
        <taxon>Gammaproteobacteria</taxon>
        <taxon>Enterobacterales</taxon>
        <taxon>Enterobacteriaceae</taxon>
        <taxon>Salmonella</taxon>
    </lineage>
</organism>
<protein>
    <recommendedName>
        <fullName evidence="1">UDP-N-acetylglucosamine--N-acetylmuramyl-(pentapeptide) pyrophosphoryl-undecaprenol N-acetylglucosamine transferase</fullName>
        <ecNumber evidence="1">2.4.1.227</ecNumber>
    </recommendedName>
    <alternativeName>
        <fullName evidence="1">Undecaprenyl-PP-MurNAc-pentapeptide-UDPGlcNAc GlcNAc transferase</fullName>
    </alternativeName>
</protein>